<sequence length="935" mass="102426">MDKDRPGDPALDDNMEEEVPSTSVVQEQVSAGDWENVLIELSDSSSEKEAEDAQLEPAQKGTKRKRVDHDAGGSAPARPMLPPQPDLPGREAILRRFPLDLRTLLQAIGAAATRIDTRAIDQFFGSQISNTEMYIMYAMAIRQAIRDRRRNPASRRDQAKWRLQTLAAGWPMGYQAYSSWMYSYTDHQTAPTFVQLQATLGCTGGRRCHVTFSAGTFKPPRCTPGDRQWLYVQSSVGNIVQSCNPRYSIFFDYMAIHRSLTKIWEEVLTPDQRVSFMEFLGFLQRTDLSYIKSFVSDALGTTSIQTPWIDDNSSTETAQAWNAGFLRGRAYGLDLLRTEGEHVEGATGETREESEDTESDGDDEDLPCIVSRGGPKVKRPPIFIRRLHRLLLMRAGKRTEQGKEVLEKARGSTYGTPRPPVPKPRPEVPQSDETATSHGSAQVPEPPTIHLAAQGMAYPLHEQRGMAPCPVAQAPHTPLPPVSPGDQLPGVSSDGRVACAPVPAPAGPIVRPWEPSLTQAAGQAFAPVRPQHMPVEPVPVPTVALERPVYPKPVRPAPPKIAMQGPGETSGIRRARERWRPAPWTPNPPRSPSQMSVRDRLARLRAEAQVKQASVEVQPPQVTQVSPQQPMEGPGAPFSQVADVVHTPGVPAMQPQYFDLPLIQPISQGAPVAPLRASMGPVPPVPATQPQYFDIPLTEPINQGASAAHFLPQQPMEGPLVPEQWMFPGAALSQSVRPGVAQSQYFDLPLTQPITHGAPAAHFLHQPPMEGPWVPEQWMFQGAPPSQGTDVVQHQLDALGYPLHALNHPGVPVSPAVNQYHLSQAAFGLPIDEDESGEGSDTSEPCEALDLSIHGRPCPQAPEWPVQGEGGQDATEVLDLSIHGRPRPRTPEWPVQGESGQNVTDHEPRRVVVSAIVHMCQDDEFPDLQDPPDEA</sequence>
<protein>
    <recommendedName>
        <fullName>Epstein-Barr nuclear antigen 3</fullName>
        <shortName>EBNA-3</shortName>
        <shortName>EBV nuclear antigen 3</shortName>
    </recommendedName>
    <alternativeName>
        <fullName>Epstein-Barr nuclear antigen 3A</fullName>
        <shortName>EBNA-3A</shortName>
        <shortName>EBV nuclear antigen 3A</shortName>
    </alternativeName>
</protein>
<proteinExistence type="evidence at protein level"/>
<feature type="chain" id="PRO_0000375936" description="Epstein-Barr nuclear antigen 3">
    <location>
        <begin position="1"/>
        <end position="935"/>
    </location>
</feature>
<feature type="region of interest" description="Disordered" evidence="2">
    <location>
        <begin position="1"/>
        <end position="89"/>
    </location>
</feature>
<feature type="region of interest" description="Disordered" evidence="2">
    <location>
        <begin position="342"/>
        <end position="373"/>
    </location>
</feature>
<feature type="region of interest" description="Disordered" evidence="2">
    <location>
        <begin position="399"/>
        <end position="446"/>
    </location>
</feature>
<feature type="region of interest" description="Disordered" evidence="2">
    <location>
        <begin position="611"/>
        <end position="634"/>
    </location>
</feature>
<feature type="region of interest" description="Disordered" evidence="2">
    <location>
        <begin position="883"/>
        <end position="908"/>
    </location>
</feature>
<feature type="compositionally biased region" description="Acidic residues" evidence="2">
    <location>
        <begin position="10"/>
        <end position="19"/>
    </location>
</feature>
<feature type="compositionally biased region" description="Polar residues" evidence="2">
    <location>
        <begin position="20"/>
        <end position="29"/>
    </location>
</feature>
<feature type="compositionally biased region" description="Acidic residues" evidence="2">
    <location>
        <begin position="352"/>
        <end position="366"/>
    </location>
</feature>
<feature type="compositionally biased region" description="Basic and acidic residues" evidence="2">
    <location>
        <begin position="399"/>
        <end position="410"/>
    </location>
</feature>
<feature type="compositionally biased region" description="Polar residues" evidence="2">
    <location>
        <begin position="431"/>
        <end position="440"/>
    </location>
</feature>
<feature type="compositionally biased region" description="Low complexity" evidence="2">
    <location>
        <begin position="615"/>
        <end position="630"/>
    </location>
</feature>
<keyword id="KW-0002">3D-structure</keyword>
<keyword id="KW-1048">Host nucleus</keyword>
<keyword id="KW-0945">Host-virus interaction</keyword>
<keyword id="KW-0804">Transcription</keyword>
<keyword id="KW-0805">Transcription regulation</keyword>
<comment type="function">
    <text evidence="1">Plays an essential role for activation and immortalization of human B-cells. Represses transcription of viral promoters TP1 and Cp through interaction with host RBPJ, and inhibits EBNA2-mediated activation of these promoters. Since Cp is the promoter for all EBNA mRNAs, EBNA3A probably contributes to a negative autoregulatory control loop.</text>
</comment>
<comment type="subunit">
    <text evidence="1">Interacts with human UCKL1. Interacts with host CTPB1; this interaction seems important for EBNA3-mediated transcriptional repression. Interacts with host RBPJ. Interacts with host USP12 and WDR48; these interactions form a deubiquitination-competent complex.</text>
</comment>
<comment type="subcellular location">
    <subcellularLocation>
        <location evidence="1">Host nucleus matrix</location>
    </subcellularLocation>
    <text evidence="1">Associated with the nuclear matrix.</text>
</comment>
<comment type="similarity">
    <text evidence="3">Belongs to the herpesviridae EBNA-3 family.</text>
</comment>
<organismHost>
    <name type="scientific">Homo sapiens</name>
    <name type="common">Human</name>
    <dbReference type="NCBI Taxonomy" id="9606"/>
</organismHost>
<evidence type="ECO:0000250" key="1">
    <source>
        <dbReference type="UniProtKB" id="P12977"/>
    </source>
</evidence>
<evidence type="ECO:0000256" key="2">
    <source>
        <dbReference type="SAM" id="MobiDB-lite"/>
    </source>
</evidence>
<evidence type="ECO:0000305" key="3"/>
<accession>Q3KST2</accession>
<reference key="1">
    <citation type="journal article" date="2005" name="J. Virol.">
        <title>Genomic sequence analysis of Epstein-Barr virus strain GD1 from a nasopharyngeal carcinoma patient.</title>
        <authorList>
            <person name="Zeng M.-S."/>
            <person name="Li D.-J."/>
            <person name="Liu Q.-L."/>
            <person name="Song L.-B."/>
            <person name="Li M.-Z."/>
            <person name="Zhang R.-H."/>
            <person name="Yu X.-J."/>
            <person name="Wang H.-M."/>
            <person name="Ernberg I."/>
            <person name="Zeng Y.-X."/>
        </authorList>
    </citation>
    <scope>NUCLEOTIDE SEQUENCE [LARGE SCALE GENOMIC DNA]</scope>
</reference>
<dbReference type="EMBL" id="AY961628">
    <property type="protein sequence ID" value="AAY41118.1"/>
    <property type="status" value="ALT_SEQ"/>
    <property type="molecule type" value="Genomic_DNA"/>
</dbReference>
<dbReference type="PDB" id="1MI5">
    <property type="method" value="X-ray"/>
    <property type="resolution" value="2.50 A"/>
    <property type="chains" value="C=325-333"/>
</dbReference>
<dbReference type="PDB" id="3SJV">
    <property type="method" value="X-ray"/>
    <property type="resolution" value="3.10 A"/>
    <property type="chains" value="C/H/M/R=325-333"/>
</dbReference>
<dbReference type="PDB" id="3SKM">
    <property type="method" value="X-ray"/>
    <property type="resolution" value="1.80 A"/>
    <property type="chains" value="C=325-331"/>
</dbReference>
<dbReference type="PDB" id="3SKO">
    <property type="method" value="X-ray"/>
    <property type="resolution" value="1.60 A"/>
    <property type="chains" value="C=325-333"/>
</dbReference>
<dbReference type="PDBsum" id="1MI5"/>
<dbReference type="PDBsum" id="3SJV"/>
<dbReference type="PDBsum" id="3SKM"/>
<dbReference type="PDBsum" id="3SKO"/>
<dbReference type="SMR" id="Q3KST2"/>
<dbReference type="ELM" id="Q3KST2"/>
<dbReference type="IntAct" id="Q3KST2">
    <property type="interactions" value="4"/>
</dbReference>
<dbReference type="EvolutionaryTrace" id="Q3KST2"/>
<dbReference type="Proteomes" id="UP000007641">
    <property type="component" value="Genome"/>
</dbReference>
<dbReference type="GO" id="GO:0044204">
    <property type="term" value="C:host cell nuclear matrix"/>
    <property type="evidence" value="ECO:0007669"/>
    <property type="project" value="UniProtKB-SubCell"/>
</dbReference>
<dbReference type="GO" id="GO:0016032">
    <property type="term" value="P:viral process"/>
    <property type="evidence" value="ECO:0007669"/>
    <property type="project" value="InterPro"/>
</dbReference>
<dbReference type="InterPro" id="IPR007706">
    <property type="entry name" value="EBNA-3/4/6"/>
</dbReference>
<dbReference type="Pfam" id="PF05009">
    <property type="entry name" value="EBV-NA3"/>
    <property type="match status" value="1"/>
</dbReference>
<name>EBNA3_EBVG</name>
<organism>
    <name type="scientific">Epstein-Barr virus (strain GD1)</name>
    <name type="common">HHV-4</name>
    <name type="synonym">Human gammaherpesvirus 4</name>
    <dbReference type="NCBI Taxonomy" id="10376"/>
    <lineage>
        <taxon>Viruses</taxon>
        <taxon>Duplodnaviria</taxon>
        <taxon>Heunggongvirae</taxon>
        <taxon>Peploviricota</taxon>
        <taxon>Herviviricetes</taxon>
        <taxon>Herpesvirales</taxon>
        <taxon>Orthoherpesviridae</taxon>
        <taxon>Gammaherpesvirinae</taxon>
        <taxon>Lymphocryptovirus</taxon>
        <taxon>Lymphocryptovirus humangamma4</taxon>
    </lineage>
</organism>
<gene>
    <name type="primary">EBNA3</name>
    <name type="ORF">BLRF3-BERF1</name>
</gene>